<name>LRC72_HUMAN</name>
<evidence type="ECO:0000305" key="1"/>
<reference key="1">
    <citation type="journal article" date="2003" name="Nature">
        <title>The DNA sequence of human chromosome 7.</title>
        <authorList>
            <person name="Hillier L.W."/>
            <person name="Fulton R.S."/>
            <person name="Fulton L.A."/>
            <person name="Graves T.A."/>
            <person name="Pepin K.H."/>
            <person name="Wagner-McPherson C."/>
            <person name="Layman D."/>
            <person name="Maas J."/>
            <person name="Jaeger S."/>
            <person name="Walker R."/>
            <person name="Wylie K."/>
            <person name="Sekhon M."/>
            <person name="Becker M.C."/>
            <person name="O'Laughlin M.D."/>
            <person name="Schaller M.E."/>
            <person name="Fewell G.A."/>
            <person name="Delehaunty K.D."/>
            <person name="Miner T.L."/>
            <person name="Nash W.E."/>
            <person name="Cordes M."/>
            <person name="Du H."/>
            <person name="Sun H."/>
            <person name="Edwards J."/>
            <person name="Bradshaw-Cordum H."/>
            <person name="Ali J."/>
            <person name="Andrews S."/>
            <person name="Isak A."/>
            <person name="Vanbrunt A."/>
            <person name="Nguyen C."/>
            <person name="Du F."/>
            <person name="Lamar B."/>
            <person name="Courtney L."/>
            <person name="Kalicki J."/>
            <person name="Ozersky P."/>
            <person name="Bielicki L."/>
            <person name="Scott K."/>
            <person name="Holmes A."/>
            <person name="Harkins R."/>
            <person name="Harris A."/>
            <person name="Strong C.M."/>
            <person name="Hou S."/>
            <person name="Tomlinson C."/>
            <person name="Dauphin-Kohlberg S."/>
            <person name="Kozlowicz-Reilly A."/>
            <person name="Leonard S."/>
            <person name="Rohlfing T."/>
            <person name="Rock S.M."/>
            <person name="Tin-Wollam A.-M."/>
            <person name="Abbott A."/>
            <person name="Minx P."/>
            <person name="Maupin R."/>
            <person name="Strowmatt C."/>
            <person name="Latreille P."/>
            <person name="Miller N."/>
            <person name="Johnson D."/>
            <person name="Murray J."/>
            <person name="Woessner J.P."/>
            <person name="Wendl M.C."/>
            <person name="Yang S.-P."/>
            <person name="Schultz B.R."/>
            <person name="Wallis J.W."/>
            <person name="Spieth J."/>
            <person name="Bieri T.A."/>
            <person name="Nelson J.O."/>
            <person name="Berkowicz N."/>
            <person name="Wohldmann P.E."/>
            <person name="Cook L.L."/>
            <person name="Hickenbotham M.T."/>
            <person name="Eldred J."/>
            <person name="Williams D."/>
            <person name="Bedell J.A."/>
            <person name="Mardis E.R."/>
            <person name="Clifton S.W."/>
            <person name="Chissoe S.L."/>
            <person name="Marra M.A."/>
            <person name="Raymond C."/>
            <person name="Haugen E."/>
            <person name="Gillett W."/>
            <person name="Zhou Y."/>
            <person name="James R."/>
            <person name="Phelps K."/>
            <person name="Iadanoto S."/>
            <person name="Bubb K."/>
            <person name="Simms E."/>
            <person name="Levy R."/>
            <person name="Clendenning J."/>
            <person name="Kaul R."/>
            <person name="Kent W.J."/>
            <person name="Furey T.S."/>
            <person name="Baertsch R.A."/>
            <person name="Brent M.R."/>
            <person name="Keibler E."/>
            <person name="Flicek P."/>
            <person name="Bork P."/>
            <person name="Suyama M."/>
            <person name="Bailey J.A."/>
            <person name="Portnoy M.E."/>
            <person name="Torrents D."/>
            <person name="Chinwalla A.T."/>
            <person name="Gish W.R."/>
            <person name="Eddy S.R."/>
            <person name="McPherson J.D."/>
            <person name="Olson M.V."/>
            <person name="Eichler E.E."/>
            <person name="Green E.D."/>
            <person name="Waterston R.H."/>
            <person name="Wilson R.K."/>
        </authorList>
    </citation>
    <scope>NUCLEOTIDE SEQUENCE [LARGE SCALE GENOMIC DNA]</scope>
</reference>
<reference key="2">
    <citation type="submission" date="2003-01" db="EMBL/GenBank/DDBJ databases">
        <title>Cloning of human full open reading frames in Gateway(TM) system entry vector (pDONR201).</title>
        <authorList>
            <person name="Ebert L."/>
            <person name="Heil O."/>
            <person name="Hennig S."/>
            <person name="Neubert P."/>
            <person name="Partsch E."/>
            <person name="Peters M."/>
            <person name="Radelof U."/>
            <person name="Schneider D."/>
            <person name="Korn B."/>
        </authorList>
    </citation>
    <scope>NUCLEOTIDE SEQUENCE [LARGE SCALE MRNA] OF 1-76</scope>
</reference>
<proteinExistence type="evidence at protein level"/>
<keyword id="KW-0433">Leucine-rich repeat</keyword>
<keyword id="KW-1267">Proteomics identification</keyword>
<keyword id="KW-1185">Reference proteome</keyword>
<keyword id="KW-0677">Repeat</keyword>
<feature type="chain" id="PRO_0000346430" description="Leucine-rich repeat-containing protein 72">
    <location>
        <begin position="1"/>
        <end position="287"/>
    </location>
</feature>
<feature type="repeat" description="LRR 1">
    <location>
        <begin position="46"/>
        <end position="67"/>
    </location>
</feature>
<feature type="repeat" description="LRR 2">
    <location>
        <begin position="68"/>
        <end position="89"/>
    </location>
</feature>
<feature type="repeat" description="LRR 3">
    <location>
        <begin position="90"/>
        <end position="111"/>
    </location>
</feature>
<feature type="repeat" description="LRR 4">
    <location>
        <begin position="112"/>
        <end position="133"/>
    </location>
</feature>
<feature type="domain" description="LRRCT">
    <location>
        <begin position="147"/>
        <end position="185"/>
    </location>
</feature>
<organism>
    <name type="scientific">Homo sapiens</name>
    <name type="common">Human</name>
    <dbReference type="NCBI Taxonomy" id="9606"/>
    <lineage>
        <taxon>Eukaryota</taxon>
        <taxon>Metazoa</taxon>
        <taxon>Chordata</taxon>
        <taxon>Craniata</taxon>
        <taxon>Vertebrata</taxon>
        <taxon>Euteleostomi</taxon>
        <taxon>Mammalia</taxon>
        <taxon>Eutheria</taxon>
        <taxon>Euarchontoglires</taxon>
        <taxon>Primates</taxon>
        <taxon>Haplorrhini</taxon>
        <taxon>Catarrhini</taxon>
        <taxon>Hominidae</taxon>
        <taxon>Homo</taxon>
    </lineage>
</organism>
<dbReference type="EMBL" id="AC005014">
    <property type="status" value="NOT_ANNOTATED_CDS"/>
    <property type="molecule type" value="Genomic_DNA"/>
</dbReference>
<dbReference type="EMBL" id="BX102126">
    <property type="status" value="NOT_ANNOTATED_CDS"/>
    <property type="molecule type" value="mRNA"/>
</dbReference>
<dbReference type="CCDS" id="CCDS56464.1"/>
<dbReference type="RefSeq" id="NP_001182209.1">
    <property type="nucleotide sequence ID" value="NM_001195280.2"/>
</dbReference>
<dbReference type="SMR" id="A6NJI9"/>
<dbReference type="STRING" id="9606.ENSP00000384971"/>
<dbReference type="iPTMnet" id="A6NJI9"/>
<dbReference type="PhosphoSitePlus" id="A6NJI9"/>
<dbReference type="BioMuta" id="LRRC72"/>
<dbReference type="MassIVE" id="A6NJI9"/>
<dbReference type="PaxDb" id="9606-ENSP00000384971"/>
<dbReference type="PeptideAtlas" id="A6NJI9"/>
<dbReference type="ProteomicsDB" id="1339"/>
<dbReference type="Antibodypedia" id="6444">
    <property type="antibodies" value="42 antibodies from 11 providers"/>
</dbReference>
<dbReference type="DNASU" id="100506049"/>
<dbReference type="Ensembl" id="ENST00000401542.3">
    <property type="protein sequence ID" value="ENSP00000384971.2"/>
    <property type="gene ID" value="ENSG00000205858.10"/>
</dbReference>
<dbReference type="GeneID" id="100506049"/>
<dbReference type="KEGG" id="hsa:100506049"/>
<dbReference type="MANE-Select" id="ENST00000401542.3">
    <property type="protein sequence ID" value="ENSP00000384971.2"/>
    <property type="RefSeq nucleotide sequence ID" value="NM_001195280.2"/>
    <property type="RefSeq protein sequence ID" value="NP_001182209.1"/>
</dbReference>
<dbReference type="UCSC" id="uc022aaf.2">
    <property type="organism name" value="human"/>
</dbReference>
<dbReference type="AGR" id="HGNC:42972"/>
<dbReference type="CTD" id="100506049"/>
<dbReference type="GeneCards" id="LRRC72"/>
<dbReference type="HGNC" id="HGNC:42972">
    <property type="gene designation" value="LRRC72"/>
</dbReference>
<dbReference type="HPA" id="ENSG00000205858">
    <property type="expression patterns" value="Tissue enriched (testis)"/>
</dbReference>
<dbReference type="neXtProt" id="NX_A6NJI9"/>
<dbReference type="VEuPathDB" id="HostDB:ENSG00000205858"/>
<dbReference type="eggNOG" id="ENOG502S0DQ">
    <property type="taxonomic scope" value="Eukaryota"/>
</dbReference>
<dbReference type="GeneTree" id="ENSGT00940000153289"/>
<dbReference type="HOGENOM" id="CLU_061027_4_0_1"/>
<dbReference type="InParanoid" id="A6NJI9"/>
<dbReference type="OMA" id="DWGKMPT"/>
<dbReference type="OrthoDB" id="10251250at2759"/>
<dbReference type="PAN-GO" id="A6NJI9">
    <property type="GO annotations" value="0 GO annotations based on evolutionary models"/>
</dbReference>
<dbReference type="PhylomeDB" id="A6NJI9"/>
<dbReference type="TreeFam" id="TF328384"/>
<dbReference type="PathwayCommons" id="A6NJI9"/>
<dbReference type="BioGRID-ORCS" id="100506049">
    <property type="hits" value="10 hits in 1136 CRISPR screens"/>
</dbReference>
<dbReference type="Pharos" id="A6NJI9">
    <property type="development level" value="Tdark"/>
</dbReference>
<dbReference type="PRO" id="PR:A6NJI9"/>
<dbReference type="Proteomes" id="UP000005640">
    <property type="component" value="Chromosome 7"/>
</dbReference>
<dbReference type="RNAct" id="A6NJI9">
    <property type="molecule type" value="protein"/>
</dbReference>
<dbReference type="Bgee" id="ENSG00000205858">
    <property type="expression patterns" value="Expressed in male germ line stem cell (sensu Vertebrata) in testis and 22 other cell types or tissues"/>
</dbReference>
<dbReference type="ExpressionAtlas" id="A6NJI9">
    <property type="expression patterns" value="baseline and differential"/>
</dbReference>
<dbReference type="Gene3D" id="3.80.10.10">
    <property type="entry name" value="Ribonuclease Inhibitor"/>
    <property type="match status" value="1"/>
</dbReference>
<dbReference type="InterPro" id="IPR001611">
    <property type="entry name" value="Leu-rich_rpt"/>
</dbReference>
<dbReference type="InterPro" id="IPR042655">
    <property type="entry name" value="LRC72"/>
</dbReference>
<dbReference type="InterPro" id="IPR032675">
    <property type="entry name" value="LRR_dom_sf"/>
</dbReference>
<dbReference type="PANTHER" id="PTHR46759">
    <property type="entry name" value="LEUCINE-RICH REPEAT-CONTAINING PROTEIN 72"/>
    <property type="match status" value="1"/>
</dbReference>
<dbReference type="PANTHER" id="PTHR46759:SF1">
    <property type="entry name" value="LEUCINE-RICH REPEAT-CONTAINING PROTEIN 72"/>
    <property type="match status" value="1"/>
</dbReference>
<dbReference type="Pfam" id="PF14580">
    <property type="entry name" value="LRR_9"/>
    <property type="match status" value="1"/>
</dbReference>
<dbReference type="SUPFAM" id="SSF52058">
    <property type="entry name" value="L domain-like"/>
    <property type="match status" value="1"/>
</dbReference>
<dbReference type="PROSITE" id="PS51450">
    <property type="entry name" value="LRR"/>
    <property type="match status" value="4"/>
</dbReference>
<sequence length="287" mass="33656">MSWDPNPVPRTLRCWRLRRASETALQSSRRAVEDQLKICGHRRDADVFELFLSKKELTEVIDLSRFKKLKYLWLHHNKLHGITFLTRNYCLTELYLNNNAIFEIEGLHYLPSLHILLLHHNELTNIDATVKELKGMLNLKILSLYQNPLCQYNLYRLYIIYHLPGVELLDRNQVTEKERRSMITIFNHKKAHIVQSIAFGGKVDASWDPKSPFKQKPAQRVPSDFAFANNVDKTVLDDPEDAVFVRSMKRSVMTLTSMNWDTVPTREERYLEEEGTETAQMLTVTLR</sequence>
<accession>A6NJI9</accession>
<protein>
    <recommendedName>
        <fullName>Leucine-rich repeat-containing protein 72</fullName>
    </recommendedName>
</protein>
<comment type="sequence caution" evidence="1">
    <conflict type="miscellaneous discrepancy">
        <sequence resource="EMBL" id="BX102126"/>
    </conflict>
    <text>Contaminating sequence. Potential poly-A sequence.</text>
</comment>
<gene>
    <name type="primary">LRRC72</name>
</gene>